<evidence type="ECO:0000250" key="1"/>
<evidence type="ECO:0000255" key="2">
    <source>
        <dbReference type="HAMAP-Rule" id="MF_00118"/>
    </source>
</evidence>
<sequence>MAKSKFERVKPHVNVGTIGHVDHGKTTLTAAITTILTKKFGGEAKSYDQIDSAPEERARGITINTSHVEYETDKRHYAHVDCPGHADYVKNMITGAAQMDGAILVVSAADGPMPQTREHILLARQVGVPYIIVFMNKADMVDDAELLELVEMEIRELLSNYDFPGDDTPIIIGSALKALEGDKSDIGEAAILKLAEALDSYIPEPERAIDGAFIMPVEDVFSISGRGTVVTGRVERGIVKVGDEIEIVGLKPTIKTVCTGVEMFRKLLDQGQAGDNVGILLRGTKREEVERGQVLAKPGSILPHTKFTAEIYVLSKEEGGRHTPFFAGYRPQFYFRTTDVTGSIELPAGVEMVMPGDNISVTVNLIAPIAMDEGLRFAIREGGRTVGAGVVAKVIE</sequence>
<keyword id="KW-0963">Cytoplasm</keyword>
<keyword id="KW-0251">Elongation factor</keyword>
<keyword id="KW-0342">GTP-binding</keyword>
<keyword id="KW-0378">Hydrolase</keyword>
<keyword id="KW-0460">Magnesium</keyword>
<keyword id="KW-0479">Metal-binding</keyword>
<keyword id="KW-0547">Nucleotide-binding</keyword>
<keyword id="KW-0648">Protein biosynthesis</keyword>
<keyword id="KW-1185">Reference proteome</keyword>
<proteinExistence type="inferred from homology"/>
<reference key="1">
    <citation type="journal article" date="2003" name="J. Bacteriol.">
        <title>Complete genome sequence of the ammonia-oxidizing bacterium and obligate chemolithoautotroph Nitrosomonas europaea.</title>
        <authorList>
            <person name="Chain P."/>
            <person name="Lamerdin J.E."/>
            <person name="Larimer F.W."/>
            <person name="Regala W."/>
            <person name="Lao V."/>
            <person name="Land M.L."/>
            <person name="Hauser L."/>
            <person name="Hooper A.B."/>
            <person name="Klotz M.G."/>
            <person name="Norton J."/>
            <person name="Sayavedra-Soto L.A."/>
            <person name="Arciero D.M."/>
            <person name="Hommes N.G."/>
            <person name="Whittaker M.M."/>
            <person name="Arp D.J."/>
        </authorList>
    </citation>
    <scope>NUCLEOTIDE SEQUENCE [LARGE SCALE GENOMIC DNA]</scope>
    <source>
        <strain>ATCC 19718 / CIP 103999 / KCTC 2705 / NBRC 14298</strain>
    </source>
</reference>
<accession>Q81ZS3</accession>
<dbReference type="EC" id="3.6.5.3" evidence="2"/>
<dbReference type="EMBL" id="AL954747">
    <property type="protein sequence ID" value="CAD84310.1"/>
    <property type="molecule type" value="Genomic_DNA"/>
</dbReference>
<dbReference type="EMBL" id="AL954747">
    <property type="protein sequence ID" value="CAD85963.1"/>
    <property type="molecule type" value="Genomic_DNA"/>
</dbReference>
<dbReference type="SMR" id="Q81ZS3"/>
<dbReference type="STRING" id="228410.NE0399"/>
<dbReference type="GeneID" id="87105191"/>
<dbReference type="KEGG" id="neu:NE0399"/>
<dbReference type="KEGG" id="neu:NE2052"/>
<dbReference type="eggNOG" id="COG0050">
    <property type="taxonomic scope" value="Bacteria"/>
</dbReference>
<dbReference type="HOGENOM" id="CLU_007265_0_2_4"/>
<dbReference type="OrthoDB" id="9803139at2"/>
<dbReference type="PhylomeDB" id="Q81ZS3"/>
<dbReference type="Proteomes" id="UP000001416">
    <property type="component" value="Chromosome"/>
</dbReference>
<dbReference type="GO" id="GO:0005829">
    <property type="term" value="C:cytosol"/>
    <property type="evidence" value="ECO:0007669"/>
    <property type="project" value="TreeGrafter"/>
</dbReference>
<dbReference type="GO" id="GO:0005525">
    <property type="term" value="F:GTP binding"/>
    <property type="evidence" value="ECO:0007669"/>
    <property type="project" value="UniProtKB-UniRule"/>
</dbReference>
<dbReference type="GO" id="GO:0003924">
    <property type="term" value="F:GTPase activity"/>
    <property type="evidence" value="ECO:0007669"/>
    <property type="project" value="InterPro"/>
</dbReference>
<dbReference type="GO" id="GO:0097216">
    <property type="term" value="F:guanosine tetraphosphate binding"/>
    <property type="evidence" value="ECO:0007669"/>
    <property type="project" value="UniProtKB-ARBA"/>
</dbReference>
<dbReference type="GO" id="GO:0003746">
    <property type="term" value="F:translation elongation factor activity"/>
    <property type="evidence" value="ECO:0007669"/>
    <property type="project" value="UniProtKB-UniRule"/>
</dbReference>
<dbReference type="CDD" id="cd01884">
    <property type="entry name" value="EF_Tu"/>
    <property type="match status" value="1"/>
</dbReference>
<dbReference type="CDD" id="cd03697">
    <property type="entry name" value="EFTU_II"/>
    <property type="match status" value="1"/>
</dbReference>
<dbReference type="CDD" id="cd03707">
    <property type="entry name" value="EFTU_III"/>
    <property type="match status" value="1"/>
</dbReference>
<dbReference type="FunFam" id="2.40.30.10:FF:000001">
    <property type="entry name" value="Elongation factor Tu"/>
    <property type="match status" value="1"/>
</dbReference>
<dbReference type="FunFam" id="3.40.50.300:FF:000003">
    <property type="entry name" value="Elongation factor Tu"/>
    <property type="match status" value="1"/>
</dbReference>
<dbReference type="Gene3D" id="3.40.50.300">
    <property type="entry name" value="P-loop containing nucleotide triphosphate hydrolases"/>
    <property type="match status" value="1"/>
</dbReference>
<dbReference type="Gene3D" id="2.40.30.10">
    <property type="entry name" value="Translation factors"/>
    <property type="match status" value="2"/>
</dbReference>
<dbReference type="HAMAP" id="MF_00118_B">
    <property type="entry name" value="EF_Tu_B"/>
    <property type="match status" value="1"/>
</dbReference>
<dbReference type="InterPro" id="IPR041709">
    <property type="entry name" value="EF-Tu_GTP-bd"/>
</dbReference>
<dbReference type="InterPro" id="IPR050055">
    <property type="entry name" value="EF-Tu_GTPase"/>
</dbReference>
<dbReference type="InterPro" id="IPR004161">
    <property type="entry name" value="EFTu-like_2"/>
</dbReference>
<dbReference type="InterPro" id="IPR033720">
    <property type="entry name" value="EFTU_2"/>
</dbReference>
<dbReference type="InterPro" id="IPR031157">
    <property type="entry name" value="G_TR_CS"/>
</dbReference>
<dbReference type="InterPro" id="IPR027417">
    <property type="entry name" value="P-loop_NTPase"/>
</dbReference>
<dbReference type="InterPro" id="IPR005225">
    <property type="entry name" value="Small_GTP-bd"/>
</dbReference>
<dbReference type="InterPro" id="IPR000795">
    <property type="entry name" value="T_Tr_GTP-bd_dom"/>
</dbReference>
<dbReference type="InterPro" id="IPR009000">
    <property type="entry name" value="Transl_B-barrel_sf"/>
</dbReference>
<dbReference type="InterPro" id="IPR009001">
    <property type="entry name" value="Transl_elong_EF1A/Init_IF2_C"/>
</dbReference>
<dbReference type="InterPro" id="IPR004541">
    <property type="entry name" value="Transl_elong_EFTu/EF1A_bac/org"/>
</dbReference>
<dbReference type="InterPro" id="IPR004160">
    <property type="entry name" value="Transl_elong_EFTu/EF1A_C"/>
</dbReference>
<dbReference type="NCBIfam" id="TIGR00485">
    <property type="entry name" value="EF-Tu"/>
    <property type="match status" value="1"/>
</dbReference>
<dbReference type="NCBIfam" id="NF000766">
    <property type="entry name" value="PRK00049.1"/>
    <property type="match status" value="1"/>
</dbReference>
<dbReference type="NCBIfam" id="NF009372">
    <property type="entry name" value="PRK12735.1"/>
    <property type="match status" value="1"/>
</dbReference>
<dbReference type="NCBIfam" id="NF009373">
    <property type="entry name" value="PRK12736.1"/>
    <property type="match status" value="1"/>
</dbReference>
<dbReference type="NCBIfam" id="TIGR00231">
    <property type="entry name" value="small_GTP"/>
    <property type="match status" value="1"/>
</dbReference>
<dbReference type="PANTHER" id="PTHR43721:SF22">
    <property type="entry name" value="ELONGATION FACTOR TU, MITOCHONDRIAL"/>
    <property type="match status" value="1"/>
</dbReference>
<dbReference type="PANTHER" id="PTHR43721">
    <property type="entry name" value="ELONGATION FACTOR TU-RELATED"/>
    <property type="match status" value="1"/>
</dbReference>
<dbReference type="Pfam" id="PF00009">
    <property type="entry name" value="GTP_EFTU"/>
    <property type="match status" value="1"/>
</dbReference>
<dbReference type="Pfam" id="PF03144">
    <property type="entry name" value="GTP_EFTU_D2"/>
    <property type="match status" value="1"/>
</dbReference>
<dbReference type="Pfam" id="PF03143">
    <property type="entry name" value="GTP_EFTU_D3"/>
    <property type="match status" value="1"/>
</dbReference>
<dbReference type="PRINTS" id="PR00315">
    <property type="entry name" value="ELONGATNFCT"/>
</dbReference>
<dbReference type="SUPFAM" id="SSF50465">
    <property type="entry name" value="EF-Tu/eEF-1alpha/eIF2-gamma C-terminal domain"/>
    <property type="match status" value="1"/>
</dbReference>
<dbReference type="SUPFAM" id="SSF52540">
    <property type="entry name" value="P-loop containing nucleoside triphosphate hydrolases"/>
    <property type="match status" value="1"/>
</dbReference>
<dbReference type="SUPFAM" id="SSF50447">
    <property type="entry name" value="Translation proteins"/>
    <property type="match status" value="1"/>
</dbReference>
<dbReference type="PROSITE" id="PS00301">
    <property type="entry name" value="G_TR_1"/>
    <property type="match status" value="1"/>
</dbReference>
<dbReference type="PROSITE" id="PS51722">
    <property type="entry name" value="G_TR_2"/>
    <property type="match status" value="1"/>
</dbReference>
<organism>
    <name type="scientific">Nitrosomonas europaea (strain ATCC 19718 / CIP 103999 / KCTC 2705 / NBRC 14298)</name>
    <dbReference type="NCBI Taxonomy" id="228410"/>
    <lineage>
        <taxon>Bacteria</taxon>
        <taxon>Pseudomonadati</taxon>
        <taxon>Pseudomonadota</taxon>
        <taxon>Betaproteobacteria</taxon>
        <taxon>Nitrosomonadales</taxon>
        <taxon>Nitrosomonadaceae</taxon>
        <taxon>Nitrosomonas</taxon>
    </lineage>
</organism>
<gene>
    <name evidence="2" type="primary">tuf1</name>
    <name type="ordered locus">NE0399</name>
</gene>
<gene>
    <name evidence="2" type="primary">tuf2</name>
    <name type="ordered locus">NE2052</name>
</gene>
<comment type="function">
    <text evidence="2">GTP hydrolase that promotes the GTP-dependent binding of aminoacyl-tRNA to the A-site of ribosomes during protein biosynthesis.</text>
</comment>
<comment type="catalytic activity">
    <reaction evidence="2">
        <text>GTP + H2O = GDP + phosphate + H(+)</text>
        <dbReference type="Rhea" id="RHEA:19669"/>
        <dbReference type="ChEBI" id="CHEBI:15377"/>
        <dbReference type="ChEBI" id="CHEBI:15378"/>
        <dbReference type="ChEBI" id="CHEBI:37565"/>
        <dbReference type="ChEBI" id="CHEBI:43474"/>
        <dbReference type="ChEBI" id="CHEBI:58189"/>
        <dbReference type="EC" id="3.6.5.3"/>
    </reaction>
    <physiologicalReaction direction="left-to-right" evidence="2">
        <dbReference type="Rhea" id="RHEA:19670"/>
    </physiologicalReaction>
</comment>
<comment type="subunit">
    <text evidence="2">Monomer.</text>
</comment>
<comment type="subcellular location">
    <subcellularLocation>
        <location evidence="2">Cytoplasm</location>
    </subcellularLocation>
</comment>
<comment type="similarity">
    <text evidence="2">Belongs to the TRAFAC class translation factor GTPase superfamily. Classic translation factor GTPase family. EF-Tu/EF-1A subfamily.</text>
</comment>
<protein>
    <recommendedName>
        <fullName evidence="2">Elongation factor Tu</fullName>
        <shortName evidence="2">EF-Tu</shortName>
        <ecNumber evidence="2">3.6.5.3</ecNumber>
    </recommendedName>
</protein>
<feature type="chain" id="PRO_0000337444" description="Elongation factor Tu">
    <location>
        <begin position="1"/>
        <end position="396"/>
    </location>
</feature>
<feature type="domain" description="tr-type G">
    <location>
        <begin position="10"/>
        <end position="206"/>
    </location>
</feature>
<feature type="region of interest" description="G1" evidence="1">
    <location>
        <begin position="19"/>
        <end position="26"/>
    </location>
</feature>
<feature type="region of interest" description="G2" evidence="1">
    <location>
        <begin position="60"/>
        <end position="64"/>
    </location>
</feature>
<feature type="region of interest" description="G3" evidence="1">
    <location>
        <begin position="81"/>
        <end position="84"/>
    </location>
</feature>
<feature type="region of interest" description="G4" evidence="1">
    <location>
        <begin position="136"/>
        <end position="139"/>
    </location>
</feature>
<feature type="region of interest" description="G5" evidence="1">
    <location>
        <begin position="174"/>
        <end position="176"/>
    </location>
</feature>
<feature type="binding site" evidence="2">
    <location>
        <begin position="19"/>
        <end position="26"/>
    </location>
    <ligand>
        <name>GTP</name>
        <dbReference type="ChEBI" id="CHEBI:37565"/>
    </ligand>
</feature>
<feature type="binding site" evidence="2">
    <location>
        <position position="26"/>
    </location>
    <ligand>
        <name>Mg(2+)</name>
        <dbReference type="ChEBI" id="CHEBI:18420"/>
    </ligand>
</feature>
<feature type="binding site" evidence="2">
    <location>
        <begin position="81"/>
        <end position="85"/>
    </location>
    <ligand>
        <name>GTP</name>
        <dbReference type="ChEBI" id="CHEBI:37565"/>
    </ligand>
</feature>
<feature type="binding site" evidence="2">
    <location>
        <begin position="136"/>
        <end position="139"/>
    </location>
    <ligand>
        <name>GTP</name>
        <dbReference type="ChEBI" id="CHEBI:37565"/>
    </ligand>
</feature>
<name>EFTU_NITEU</name>